<proteinExistence type="evidence at protein level"/>
<gene>
    <name type="primary">glcA</name>
</gene>
<feature type="signal peptide" evidence="4">
    <location>
        <begin position="1"/>
        <end position="38"/>
    </location>
</feature>
<feature type="chain" id="PRO_0000011796" description="Glucan endo-1,3-beta-glucosidase A1">
    <location>
        <begin position="39"/>
        <end position="682"/>
    </location>
</feature>
<feature type="domain" description="GH16" evidence="2">
    <location>
        <begin position="391"/>
        <end position="682"/>
    </location>
</feature>
<feature type="active site" description="Nucleophile" evidence="3">
    <location>
        <position position="552"/>
    </location>
</feature>
<feature type="active site" description="Proton donor" evidence="3">
    <location>
        <position position="557"/>
    </location>
</feature>
<reference key="1">
    <citation type="journal article" date="1990" name="Gene">
        <title>Structure of the gene encoding beta-1,3-glucanase A1 of Bacillus circulans WL-12.</title>
        <authorList>
            <person name="Yahata N."/>
            <person name="Watanabe T."/>
            <person name="Nakamura Y."/>
            <person name="Yamamoto Y."/>
            <person name="Kamimiya S."/>
            <person name="Tanaka H."/>
        </authorList>
    </citation>
    <scope>NUCLEOTIDE SEQUENCE [GENOMIC DNA]</scope>
    <scope>PROTEIN SEQUENCE OF 39-52</scope>
    <source>
        <strain>WL-12</strain>
    </source>
</reference>
<sequence length="682" mass="75466">MKPSHFTEKRFMKKVLGLFLVVVMLASVGVLPTSKVQAAGTTVTSMEYFSPADGPVISKSGVGKASYGFVMPKFNGGSATWNDVYSDVGVNVKVGNNWVDIDQAGGYIYNQNWGHWSDGGFNGYWFTLSATTEIQLYSKANGVKLEYQLVFQNINKTTITAMNPTQGPQITASFTGGAGFTYPTFNNDSAVTYEAVADDLKVYVKPVNSSSWIDIDNNAASGWIYDHNFGQFTDGGGGYWFNVTESINVKLESKTSSANLVYTITFNEPTRNSYVITPYEGTTFTADANGSIGIPLPKIDGGAPIAKELGNFVYQININGQWVDLSNSSQSKFAYSANGYNNMSDANQWGYWADYIYGLWFQPIQENMQIRIGYPLNGQAGGNIGNNFVNYTFIGNPNAPRPDVSDQEDISIGTPTDPAIAGMNLIWQDEFNGTTLDTSKWNYETGYYLNNDPATWGWGNAELQHYTNSTQNVYVQDGKLNIKAMNDSKSFPQDPNRYAQYSSGKINTKDKLSLKYGRVDFRAKLPTGDGVWPALWMLPKDSVYGTWAASGEIDVMEARGRLPGSVSGTIHFGGQWPVNQSSGGDYHFPEGQTFANDYHVYSVVWEEDNIKWYVDGKFFYKVTNQQWYSTAAPNNPNAPFDEPFYLIMNLAVGGNFDGGRTPNASDIPATMQVDYVRVYKEQ</sequence>
<comment type="function">
    <text>Lysis of cellular walls containing beta-1,3-glucans. Implicated in the defense against fungal pathogens.</text>
</comment>
<comment type="catalytic activity">
    <reaction>
        <text>Hydrolysis of (1-&gt;3)-beta-D-glucosidic linkages in (1-&gt;3)-beta-D-glucans.</text>
        <dbReference type="EC" id="3.2.1.39"/>
    </reaction>
</comment>
<comment type="subcellular location">
    <subcellularLocation>
        <location evidence="1">Secreted</location>
    </subcellularLocation>
</comment>
<comment type="similarity">
    <text evidence="5">Belongs to the glycosyl hydrolase 16 family.</text>
</comment>
<organism>
    <name type="scientific">Niallia circulans</name>
    <name type="common">Bacillus circulans</name>
    <dbReference type="NCBI Taxonomy" id="1397"/>
    <lineage>
        <taxon>Bacteria</taxon>
        <taxon>Bacillati</taxon>
        <taxon>Bacillota</taxon>
        <taxon>Bacilli</taxon>
        <taxon>Bacillales</taxon>
        <taxon>Bacillaceae</taxon>
        <taxon>Niallia</taxon>
    </lineage>
</organism>
<accession>P23903</accession>
<protein>
    <recommendedName>
        <fullName>Glucan endo-1,3-beta-glucosidase A1</fullName>
        <ecNumber>3.2.1.39</ecNumber>
    </recommendedName>
    <alternativeName>
        <fullName>(1-&gt;3)-beta-glucan endohydrolase</fullName>
    </alternativeName>
    <alternativeName>
        <fullName>(1-&gt;3)-beta-glucanase A1</fullName>
    </alternativeName>
</protein>
<name>E13B_NIACI</name>
<keyword id="KW-0961">Cell wall biogenesis/degradation</keyword>
<keyword id="KW-0903">Direct protein sequencing</keyword>
<keyword id="KW-0326">Glycosidase</keyword>
<keyword id="KW-0378">Hydrolase</keyword>
<keyword id="KW-0964">Secreted</keyword>
<keyword id="KW-0732">Signal</keyword>
<evidence type="ECO:0000250" key="1"/>
<evidence type="ECO:0000255" key="2">
    <source>
        <dbReference type="PROSITE-ProRule" id="PRU01098"/>
    </source>
</evidence>
<evidence type="ECO:0000255" key="3">
    <source>
        <dbReference type="PROSITE-ProRule" id="PRU10064"/>
    </source>
</evidence>
<evidence type="ECO:0000269" key="4">
    <source>
    </source>
</evidence>
<evidence type="ECO:0000305" key="5"/>
<dbReference type="EC" id="3.2.1.39"/>
<dbReference type="EMBL" id="M34503">
    <property type="protein sequence ID" value="AAA22474.1"/>
    <property type="molecule type" value="Genomic_DNA"/>
</dbReference>
<dbReference type="PIR" id="JQ0420">
    <property type="entry name" value="JQ0420"/>
</dbReference>
<dbReference type="SMR" id="P23903"/>
<dbReference type="CAZy" id="GH16">
    <property type="family name" value="Glycoside Hydrolase Family 16"/>
</dbReference>
<dbReference type="GO" id="GO:0005576">
    <property type="term" value="C:extracellular region"/>
    <property type="evidence" value="ECO:0007669"/>
    <property type="project" value="UniProtKB-SubCell"/>
</dbReference>
<dbReference type="GO" id="GO:0042973">
    <property type="term" value="F:glucan endo-1,3-beta-D-glucosidase activity"/>
    <property type="evidence" value="ECO:0007669"/>
    <property type="project" value="UniProtKB-EC"/>
</dbReference>
<dbReference type="GO" id="GO:0005975">
    <property type="term" value="P:carbohydrate metabolic process"/>
    <property type="evidence" value="ECO:0007669"/>
    <property type="project" value="InterPro"/>
</dbReference>
<dbReference type="GO" id="GO:0071555">
    <property type="term" value="P:cell wall organization"/>
    <property type="evidence" value="ECO:0007669"/>
    <property type="project" value="UniProtKB-KW"/>
</dbReference>
<dbReference type="CDD" id="cd08023">
    <property type="entry name" value="GH16_laminarinase_like"/>
    <property type="match status" value="1"/>
</dbReference>
<dbReference type="Gene3D" id="2.60.120.200">
    <property type="match status" value="1"/>
</dbReference>
<dbReference type="InterPro" id="IPR013320">
    <property type="entry name" value="ConA-like_dom_sf"/>
</dbReference>
<dbReference type="InterPro" id="IPR000757">
    <property type="entry name" value="GH16"/>
</dbReference>
<dbReference type="InterPro" id="IPR008263">
    <property type="entry name" value="GH16_AS"/>
</dbReference>
<dbReference type="InterPro" id="IPR050546">
    <property type="entry name" value="Glycosyl_Hydrlase_16"/>
</dbReference>
<dbReference type="PANTHER" id="PTHR10963:SF55">
    <property type="entry name" value="GLYCOSIDE HYDROLASE FAMILY 16 PROTEIN"/>
    <property type="match status" value="1"/>
</dbReference>
<dbReference type="PANTHER" id="PTHR10963">
    <property type="entry name" value="GLYCOSYL HYDROLASE-RELATED"/>
    <property type="match status" value="1"/>
</dbReference>
<dbReference type="Pfam" id="PF00722">
    <property type="entry name" value="Glyco_hydro_16"/>
    <property type="match status" value="1"/>
</dbReference>
<dbReference type="SUPFAM" id="SSF49899">
    <property type="entry name" value="Concanavalin A-like lectins/glucanases"/>
    <property type="match status" value="1"/>
</dbReference>
<dbReference type="PROSITE" id="PS01034">
    <property type="entry name" value="GH16_1"/>
    <property type="match status" value="1"/>
</dbReference>
<dbReference type="PROSITE" id="PS51762">
    <property type="entry name" value="GH16_2"/>
    <property type="match status" value="1"/>
</dbReference>